<keyword id="KW-0002">3D-structure</keyword>
<keyword id="KW-0025">Alternative splicing</keyword>
<keyword id="KW-0903">Direct protein sequencing</keyword>
<keyword id="KW-0343">GTPase activation</keyword>
<keyword id="KW-0472">Membrane</keyword>
<keyword id="KW-0597">Phosphoprotein</keyword>
<keyword id="KW-1185">Reference proteome</keyword>
<keyword id="KW-0729">SH3-binding</keyword>
<keyword id="KW-0770">Synapse</keyword>
<gene>
    <name type="primary">Syngap1</name>
</gene>
<accession>Q9QUH6</accession>
<accession>O88449</accession>
<accession>Q9ESK6</accession>
<accession>Q9ET81</accession>
<accession>Q9QX02</accession>
<accession>Q9QX06</accession>
<accession>Q9QX12</accession>
<feature type="chain" id="PRO_0000056655" description="Ras/Rap GTPase-activating protein SynGAP">
    <location>
        <begin position="1"/>
        <end position="1308"/>
    </location>
</feature>
<feature type="domain" description="PH" evidence="4">
    <location>
        <begin position="150"/>
        <end position="251"/>
    </location>
</feature>
<feature type="domain" description="C2" evidence="3">
    <location>
        <begin position="242"/>
        <end position="363"/>
    </location>
</feature>
<feature type="domain" description="Ras-GAP" evidence="5">
    <location>
        <begin position="459"/>
        <end position="667"/>
    </location>
</feature>
<feature type="region of interest" description="Disordered" evidence="6">
    <location>
        <begin position="92"/>
        <end position="113"/>
    </location>
</feature>
<feature type="region of interest" description="Disordered" evidence="6">
    <location>
        <begin position="373"/>
        <end position="394"/>
    </location>
</feature>
<feature type="region of interest" description="Disordered" evidence="6">
    <location>
        <begin position="725"/>
        <end position="751"/>
    </location>
</feature>
<feature type="region of interest" description="Disordered" evidence="6">
    <location>
        <begin position="781"/>
        <end position="809"/>
    </location>
</feature>
<feature type="region of interest" description="Disordered" evidence="6">
    <location>
        <begin position="932"/>
        <end position="1017"/>
    </location>
</feature>
<feature type="region of interest" description="Disordered" evidence="6">
    <location>
        <begin position="1033"/>
        <end position="1153"/>
    </location>
</feature>
<feature type="region of interest" description="Interaction with MPDZ" evidence="7">
    <location>
        <begin position="1197"/>
        <end position="1308"/>
    </location>
</feature>
<feature type="region of interest" description="Disordered" evidence="6">
    <location>
        <begin position="1276"/>
        <end position="1308"/>
    </location>
</feature>
<feature type="short sequence motif" description="SH3-binding" evidence="2">
    <location>
        <begin position="785"/>
        <end position="815"/>
    </location>
</feature>
<feature type="short sequence motif" description="PDZ-binding" evidence="2">
    <location>
        <begin position="1305"/>
        <end position="1308"/>
    </location>
</feature>
<feature type="compositionally biased region" description="Basic and acidic residues" evidence="6">
    <location>
        <begin position="92"/>
        <end position="102"/>
    </location>
</feature>
<feature type="compositionally biased region" description="Polar residues" evidence="6">
    <location>
        <begin position="725"/>
        <end position="736"/>
    </location>
</feature>
<feature type="compositionally biased region" description="Basic residues" evidence="6">
    <location>
        <begin position="956"/>
        <end position="967"/>
    </location>
</feature>
<feature type="compositionally biased region" description="Gly residues" evidence="6">
    <location>
        <begin position="1048"/>
        <end position="1063"/>
    </location>
</feature>
<feature type="compositionally biased region" description="Polar residues" evidence="6">
    <location>
        <begin position="1072"/>
        <end position="1096"/>
    </location>
</feature>
<feature type="compositionally biased region" description="Gly residues" evidence="6">
    <location>
        <begin position="1114"/>
        <end position="1129"/>
    </location>
</feature>
<feature type="compositionally biased region" description="Polar residues" evidence="6">
    <location>
        <begin position="1133"/>
        <end position="1148"/>
    </location>
</feature>
<feature type="compositionally biased region" description="Basic and acidic residues" evidence="6">
    <location>
        <begin position="1276"/>
        <end position="1293"/>
    </location>
</feature>
<feature type="site" description="Arginine finger; crucial for GTP hydrolysis by stabilizing the transition state" evidence="5">
    <location>
        <position position="485"/>
    </location>
</feature>
<feature type="modified residue" description="Phosphotyrosine" evidence="1">
    <location>
        <position position="34"/>
    </location>
</feature>
<feature type="modified residue" description="Phosphotyrosine" evidence="1">
    <location>
        <position position="39"/>
    </location>
</feature>
<feature type="modified residue" description="Phosphoserine" evidence="19">
    <location>
        <position position="117"/>
    </location>
</feature>
<feature type="modified residue" description="Phosphoserine" evidence="19">
    <location>
        <position position="371"/>
    </location>
</feature>
<feature type="modified residue" description="Phosphoserine; by PLK2" evidence="13">
    <location>
        <position position="379"/>
    </location>
</feature>
<feature type="modified residue" description="Phosphoserine; by PLK2" evidence="13">
    <location>
        <position position="385"/>
    </location>
</feature>
<feature type="modified residue" description="Phosphoserine; by PLK2" evidence="13">
    <location>
        <position position="449"/>
    </location>
</feature>
<feature type="modified residue" description="Phosphoserine; by PLK2" evidence="13">
    <location>
        <position position="466"/>
    </location>
</feature>
<feature type="modified residue" description="Phosphoserine" evidence="19">
    <location>
        <position position="752"/>
    </location>
</feature>
<feature type="modified residue" description="Phosphoserine" evidence="19">
    <location>
        <position position="766"/>
    </location>
</feature>
<feature type="modified residue" description="Phosphoserine" evidence="19">
    <location>
        <position position="780"/>
    </location>
</feature>
<feature type="modified residue" description="Phosphoserine" evidence="1">
    <location>
        <position position="823"/>
    </location>
</feature>
<feature type="modified residue" description="Phosphoserine" evidence="1">
    <location>
        <position position="825"/>
    </location>
</feature>
<feature type="modified residue" description="Phosphothreonine" evidence="1">
    <location>
        <position position="828"/>
    </location>
</feature>
<feature type="modified residue" description="Phosphoserine; by PLK2" evidence="13">
    <location>
        <position position="836"/>
    </location>
</feature>
<feature type="modified residue" description="Phosphoserine; by PLK2" evidence="13">
    <location>
        <position position="840"/>
    </location>
</feature>
<feature type="modified residue" description="Phosphoserine; by PLK2" evidence="13">
    <location>
        <position position="842"/>
    </location>
</feature>
<feature type="modified residue" description="Phosphoserine" evidence="1">
    <location>
        <position position="876"/>
    </location>
</feature>
<feature type="modified residue" description="Phosphoserine" evidence="19">
    <location>
        <position position="892"/>
    </location>
</feature>
<feature type="modified residue" description="Phosphoserine; by PLK2" evidence="13 19">
    <location>
        <position position="895"/>
    </location>
</feature>
<feature type="modified residue" description="Phosphoserine" evidence="19">
    <location>
        <position position="898"/>
    </location>
</feature>
<feature type="modified residue" description="Phosphoserine" evidence="1">
    <location>
        <position position="985"/>
    </location>
</feature>
<feature type="modified residue" description="Phosphoserine" evidence="19">
    <location>
        <position position="1114"/>
    </location>
</feature>
<feature type="modified residue" description="Phosphoserine" evidence="19">
    <location>
        <position position="1118"/>
    </location>
</feature>
<feature type="modified residue" description="Phosphoserine" evidence="19">
    <location>
        <position position="1121"/>
    </location>
</feature>
<feature type="modified residue" description="Phosphoserine" evidence="1">
    <location>
        <position position="1165"/>
    </location>
</feature>
<feature type="modified residue" description="Phosphoserine" evidence="19">
    <location>
        <position position="1204"/>
    </location>
</feature>
<feature type="splice variant" id="VSP_007976" description="In isoform 4." evidence="16">
    <location>
        <begin position="1"/>
        <end position="173"/>
    </location>
</feature>
<feature type="splice variant" id="VSP_007975" description="In isoform 5." evidence="15 17">
    <original>MSRSRASIHRGSIPAMSYAPFRDVRGPPMHRTQYVHSPYDRPGWNPRFCIISGNQLLMLDEDEIHPLLIRDRRSESSRNKLLRRTVSVPVEGRPHGEHEYHLGRSRRKSVPGGKQYSMEAA</original>
    <variation>MEYF</variation>
    <location>
        <begin position="1"/>
        <end position="121"/>
    </location>
</feature>
<feature type="splice variant" id="VSP_007974" description="In isoform 3." evidence="16 17">
    <original>MSRSRASIHRGSIPAMSYAPFRDVRGPPMHRTQYVHSPYDRPGWNPRFCIISGNQLLMLDEDEIHPLLIRDRRSESSRNKLLRRTVSVPVEGRPHGEH</original>
    <variation>MGLRPPTPTPSGGSGSGSLPPPSHRQPLRRRCSSCCFPG</variation>
    <location>
        <begin position="1"/>
        <end position="98"/>
    </location>
</feature>
<feature type="splice variant" id="VSP_026378" description="In isoform 2." evidence="16">
    <location>
        <begin position="1"/>
        <end position="15"/>
    </location>
</feature>
<feature type="splice variant" id="VSP_007977" description="In isoform 5." evidence="15 17">
    <location>
        <begin position="1195"/>
        <end position="1196"/>
    </location>
</feature>
<feature type="splice variant" id="VSP_007978" description="In isoform 5." evidence="15 17">
    <original>RLMLVEEELRRDHPAMAEPLPEPKKRLLDAQRGSFPPWVQQTRV</original>
    <variation>SPSLQADAGGGGAAPGPPRHG</variation>
    <location>
        <begin position="1265"/>
        <end position="1308"/>
    </location>
</feature>
<feature type="splice variant" id="VSP_007979" description="In isoform 2." evidence="16">
    <original>RGSFPPWVQQTRV</original>
    <variation>LLIR</variation>
    <location>
        <begin position="1296"/>
        <end position="1308"/>
    </location>
</feature>
<feature type="splice variant" id="VSP_007980" description="In isoform 4." evidence="16">
    <original>RGSFPPWVQQTRV</original>
    <variation>VERQLPPLGPTNPRVTLAPPWNGLAPPAPPPPPRLQITENGEFRNTADH</variation>
    <location>
        <begin position="1296"/>
        <end position="1308"/>
    </location>
</feature>
<feature type="mutagenesis site" description="Affects stimulation by PLK2." evidence="13">
    <original>S</original>
    <variation>A</variation>
    <location>
        <position position="385"/>
    </location>
</feature>
<feature type="mutagenesis site" description="Affects stimulation by PLK2." evidence="13">
    <original>S</original>
    <variation>A</variation>
    <location>
        <position position="449"/>
    </location>
</feature>
<feature type="mutagenesis site" description="Decreases RapGAP activity by 100-fold." evidence="12">
    <original>R</original>
    <variation>K</variation>
    <location>
        <position position="485"/>
    </location>
</feature>
<feature type="mutagenesis site" description="Abolishes RapGAP activity." evidence="12">
    <original>R</original>
    <variation>P</variation>
    <location>
        <position position="485"/>
    </location>
</feature>
<feature type="mutagenesis site" description="Decreases RapGAP activity by 20-fold." evidence="12">
    <original>N</original>
    <variation>T</variation>
    <location>
        <position position="487"/>
    </location>
</feature>
<feature type="mutagenesis site" description="Blocks the gel mobility shift induced by PLK2 and affects stimulation by PLK2." evidence="13">
    <original>S</original>
    <variation>A</variation>
    <location>
        <position position="840"/>
    </location>
</feature>
<feature type="mutagenesis site" description="Blocks the gel mobility shift induced by PLK2." evidence="13">
    <original>S</original>
    <variation>A</variation>
    <location>
        <position position="842"/>
    </location>
</feature>
<feature type="sequence conflict" description="In Ref. 1; AA sequence." evidence="18" ref="1">
    <original>WG</original>
    <variation>GY</variation>
    <location>
        <begin position="308"/>
        <end position="309"/>
    </location>
</feature>
<feature type="sequence conflict" description="In Ref. 1; AA sequence." evidence="18" ref="1">
    <original>N</original>
    <variation>M</variation>
    <location>
        <position position="316"/>
    </location>
</feature>
<feature type="sequence conflict" description="In Ref. 1; AA sequence." evidence="18" ref="1">
    <original>HYR</original>
    <variation>GQK</variation>
    <location>
        <begin position="427"/>
        <end position="429"/>
    </location>
</feature>
<feature type="sequence conflict" description="In Ref. 1; AA sequence." evidence="18" ref="1">
    <original>DGP</original>
    <variation>ADG</variation>
    <location>
        <begin position="937"/>
        <end position="939"/>
    </location>
</feature>
<feature type="sequence conflict" description="In Ref. 1; AA sequence." evidence="18" ref="1">
    <original>H</original>
    <variation>G</variation>
    <location>
        <position position="1002"/>
    </location>
</feature>
<feature type="sequence conflict" description="In Ref. 1; AA sequence." evidence="18" ref="1">
    <original>S</original>
    <variation>Q</variation>
    <location>
        <position position="1088"/>
    </location>
</feature>
<feature type="sequence conflict" description="In Ref. 1; AA sequence." evidence="18" ref="1">
    <original>H</original>
    <variation>L</variation>
    <location>
        <position position="1277"/>
    </location>
</feature>
<feature type="strand" evidence="20">
    <location>
        <begin position="257"/>
        <end position="262"/>
    </location>
</feature>
<feature type="strand" evidence="20">
    <location>
        <begin position="403"/>
        <end position="408"/>
    </location>
</feature>
<feature type="helix" evidence="20">
    <location>
        <begin position="414"/>
        <end position="417"/>
    </location>
</feature>
<feature type="helix" evidence="20">
    <location>
        <begin position="418"/>
        <end position="425"/>
    </location>
</feature>
<feature type="helix" evidence="20">
    <location>
        <begin position="428"/>
        <end position="438"/>
    </location>
</feature>
<feature type="helix" evidence="20">
    <location>
        <begin position="441"/>
        <end position="457"/>
    </location>
</feature>
<feature type="helix" evidence="20">
    <location>
        <begin position="463"/>
        <end position="475"/>
    </location>
</feature>
<feature type="strand" evidence="20">
    <location>
        <begin position="477"/>
        <end position="481"/>
    </location>
</feature>
<feature type="strand" evidence="20">
    <location>
        <begin position="486"/>
        <end position="488"/>
    </location>
</feature>
<feature type="helix" evidence="20">
    <location>
        <begin position="489"/>
        <end position="501"/>
    </location>
</feature>
<feature type="helix" evidence="20">
    <location>
        <begin position="503"/>
        <end position="519"/>
    </location>
</feature>
<feature type="turn" evidence="20">
    <location>
        <begin position="528"/>
        <end position="530"/>
    </location>
</feature>
<feature type="turn" evidence="20">
    <location>
        <begin position="533"/>
        <end position="535"/>
    </location>
</feature>
<feature type="helix" evidence="20">
    <location>
        <begin position="536"/>
        <end position="555"/>
    </location>
</feature>
<feature type="helix" evidence="20">
    <location>
        <begin position="556"/>
        <end position="560"/>
    </location>
</feature>
<feature type="helix" evidence="20">
    <location>
        <begin position="563"/>
        <end position="578"/>
    </location>
</feature>
<feature type="helix" evidence="20">
    <location>
        <begin position="582"/>
        <end position="593"/>
    </location>
</feature>
<feature type="turn" evidence="20">
    <location>
        <begin position="594"/>
        <end position="597"/>
    </location>
</feature>
<feature type="helix" evidence="20">
    <location>
        <begin position="598"/>
        <end position="603"/>
    </location>
</feature>
<feature type="turn" evidence="20">
    <location>
        <begin position="605"/>
        <end position="609"/>
    </location>
</feature>
<feature type="helix" evidence="20">
    <location>
        <begin position="617"/>
        <end position="634"/>
    </location>
</feature>
<feature type="turn" evidence="20">
    <location>
        <begin position="642"/>
        <end position="645"/>
    </location>
</feature>
<feature type="helix" evidence="20">
    <location>
        <begin position="647"/>
        <end position="649"/>
    </location>
</feature>
<feature type="helix" evidence="20">
    <location>
        <begin position="650"/>
        <end position="666"/>
    </location>
</feature>
<feature type="helix" evidence="20">
    <location>
        <begin position="685"/>
        <end position="699"/>
    </location>
</feature>
<feature type="helix" evidence="20">
    <location>
        <begin position="700"/>
        <end position="702"/>
    </location>
</feature>
<feature type="helix" evidence="20">
    <location>
        <begin position="705"/>
        <end position="710"/>
    </location>
</feature>
<feature type="turn" evidence="20">
    <location>
        <begin position="711"/>
        <end position="713"/>
    </location>
</feature>
<feature type="helix" evidence="20">
    <location>
        <begin position="714"/>
        <end position="724"/>
    </location>
</feature>
<feature type="strand" evidence="21">
    <location>
        <begin position="926"/>
        <end position="928"/>
    </location>
</feature>
<dbReference type="EMBL" id="AF048976">
    <property type="protein sequence ID" value="AAC08071.1"/>
    <property type="status" value="ALT_INIT"/>
    <property type="molecule type" value="mRNA"/>
</dbReference>
<dbReference type="EMBL" id="AF053938">
    <property type="protein sequence ID" value="AAC23491.1"/>
    <property type="molecule type" value="mRNA"/>
</dbReference>
<dbReference type="EMBL" id="AF055883">
    <property type="protein sequence ID" value="AAC23492.1"/>
    <property type="molecule type" value="mRNA"/>
</dbReference>
<dbReference type="EMBL" id="AF058789">
    <property type="protein sequence ID" value="AAC63510.2"/>
    <property type="molecule type" value="mRNA"/>
</dbReference>
<dbReference type="EMBL" id="AF058790">
    <property type="protein sequence ID" value="AAC63511.1"/>
    <property type="molecule type" value="mRNA"/>
</dbReference>
<dbReference type="EMBL" id="AF050183">
    <property type="protein sequence ID" value="AAC40082.2"/>
    <property type="molecule type" value="mRNA"/>
</dbReference>
<dbReference type="EMBL" id="AB016962">
    <property type="protein sequence ID" value="BAA74972.1"/>
    <property type="molecule type" value="mRNA"/>
</dbReference>
<dbReference type="PIR" id="T13958">
    <property type="entry name" value="T13958"/>
</dbReference>
<dbReference type="PIR" id="T14259">
    <property type="entry name" value="T14259"/>
</dbReference>
<dbReference type="PIR" id="T14270">
    <property type="entry name" value="T14270"/>
</dbReference>
<dbReference type="PDB" id="3BXJ">
    <property type="method" value="X-ray"/>
    <property type="resolution" value="3.00 A"/>
    <property type="chains" value="A/B=252-734"/>
</dbReference>
<dbReference type="PDB" id="8YM2">
    <property type="method" value="X-ray"/>
    <property type="resolution" value="2.00 A"/>
    <property type="chains" value="B=924-934"/>
</dbReference>
<dbReference type="PDBsum" id="3BXJ"/>
<dbReference type="PDBsum" id="8YM2"/>
<dbReference type="SMR" id="Q9QUH6"/>
<dbReference type="CORUM" id="Q9QUH6"/>
<dbReference type="ELM" id="Q9QUH6"/>
<dbReference type="FunCoup" id="Q9QUH6">
    <property type="interactions" value="1906"/>
</dbReference>
<dbReference type="IntAct" id="Q9QUH6">
    <property type="interactions" value="7"/>
</dbReference>
<dbReference type="MINT" id="Q9QUH6"/>
<dbReference type="STRING" id="10116.ENSRNOP00000044041"/>
<dbReference type="ChEMBL" id="CHEMBL2176804"/>
<dbReference type="GlyGen" id="Q9QUH6">
    <property type="glycosylation" value="21 sites, 1 O-linked glycan (21 sites)"/>
</dbReference>
<dbReference type="iPTMnet" id="Q9QUH6"/>
<dbReference type="PhosphoSitePlus" id="Q9QUH6"/>
<dbReference type="PaxDb" id="10116-ENSRNOP00000044041"/>
<dbReference type="UCSC" id="RGD:621090">
    <molecule id="Q9QUH6-1"/>
    <property type="organism name" value="rat"/>
</dbReference>
<dbReference type="AGR" id="RGD:621090"/>
<dbReference type="RGD" id="621090">
    <property type="gene designation" value="Syngap1"/>
</dbReference>
<dbReference type="eggNOG" id="KOG3508">
    <property type="taxonomic scope" value="Eukaryota"/>
</dbReference>
<dbReference type="InParanoid" id="Q9QUH6"/>
<dbReference type="PhylomeDB" id="Q9QUH6"/>
<dbReference type="Reactome" id="R-RNO-5658442">
    <property type="pathway name" value="Regulation of RAS by GAPs"/>
</dbReference>
<dbReference type="EvolutionaryTrace" id="Q9QUH6"/>
<dbReference type="PRO" id="PR:Q9QUH6"/>
<dbReference type="Proteomes" id="UP000002494">
    <property type="component" value="Unplaced"/>
</dbReference>
<dbReference type="GO" id="GO:0043198">
    <property type="term" value="C:dendritic shaft"/>
    <property type="evidence" value="ECO:0000266"/>
    <property type="project" value="RGD"/>
</dbReference>
<dbReference type="GO" id="GO:0098978">
    <property type="term" value="C:glutamatergic synapse"/>
    <property type="evidence" value="ECO:0000314"/>
    <property type="project" value="SynGO"/>
</dbReference>
<dbReference type="GO" id="GO:0016020">
    <property type="term" value="C:membrane"/>
    <property type="evidence" value="ECO:0000266"/>
    <property type="project" value="RGD"/>
</dbReference>
<dbReference type="GO" id="GO:0005886">
    <property type="term" value="C:plasma membrane"/>
    <property type="evidence" value="ECO:0007669"/>
    <property type="project" value="GOC"/>
</dbReference>
<dbReference type="GO" id="GO:0014069">
    <property type="term" value="C:postsynaptic density"/>
    <property type="evidence" value="ECO:0000266"/>
    <property type="project" value="RGD"/>
</dbReference>
<dbReference type="GO" id="GO:0099092">
    <property type="term" value="C:postsynaptic density, intracellular component"/>
    <property type="evidence" value="ECO:0000314"/>
    <property type="project" value="SynGO"/>
</dbReference>
<dbReference type="GO" id="GO:0045202">
    <property type="term" value="C:synapse"/>
    <property type="evidence" value="ECO:0000314"/>
    <property type="project" value="CACAO"/>
</dbReference>
<dbReference type="GO" id="GO:0005096">
    <property type="term" value="F:GTPase activator activity"/>
    <property type="evidence" value="ECO:0000314"/>
    <property type="project" value="RGD"/>
</dbReference>
<dbReference type="GO" id="GO:0019901">
    <property type="term" value="F:protein kinase binding"/>
    <property type="evidence" value="ECO:0000353"/>
    <property type="project" value="UniProtKB"/>
</dbReference>
<dbReference type="GO" id="GO:0017124">
    <property type="term" value="F:SH3 domain binding"/>
    <property type="evidence" value="ECO:0007669"/>
    <property type="project" value="UniProtKB-KW"/>
</dbReference>
<dbReference type="GO" id="GO:0007409">
    <property type="term" value="P:axonogenesis"/>
    <property type="evidence" value="ECO:0000266"/>
    <property type="project" value="RGD"/>
</dbReference>
<dbReference type="GO" id="GO:0016358">
    <property type="term" value="P:dendrite development"/>
    <property type="evidence" value="ECO:0000266"/>
    <property type="project" value="RGD"/>
</dbReference>
<dbReference type="GO" id="GO:0098880">
    <property type="term" value="P:maintenance of postsynaptic specialization structure"/>
    <property type="evidence" value="ECO:0000266"/>
    <property type="project" value="RGD"/>
</dbReference>
<dbReference type="GO" id="GO:0050804">
    <property type="term" value="P:modulation of chemical synaptic transmission"/>
    <property type="evidence" value="ECO:0000266"/>
    <property type="project" value="RGD"/>
</dbReference>
<dbReference type="GO" id="GO:0050771">
    <property type="term" value="P:negative regulation of axonogenesis"/>
    <property type="evidence" value="ECO:0000266"/>
    <property type="project" value="RGD"/>
</dbReference>
<dbReference type="GO" id="GO:0043524">
    <property type="term" value="P:negative regulation of neuron apoptotic process"/>
    <property type="evidence" value="ECO:0000266"/>
    <property type="project" value="RGD"/>
</dbReference>
<dbReference type="GO" id="GO:0046580">
    <property type="term" value="P:negative regulation of Ras protein signal transduction"/>
    <property type="evidence" value="ECO:0000314"/>
    <property type="project" value="UniProtKB"/>
</dbReference>
<dbReference type="GO" id="GO:0051402">
    <property type="term" value="P:neuron apoptotic process"/>
    <property type="evidence" value="ECO:0000266"/>
    <property type="project" value="RGD"/>
</dbReference>
<dbReference type="GO" id="GO:0007389">
    <property type="term" value="P:pattern specification process"/>
    <property type="evidence" value="ECO:0000266"/>
    <property type="project" value="RGD"/>
</dbReference>
<dbReference type="GO" id="GO:0007265">
    <property type="term" value="P:Ras protein signal transduction"/>
    <property type="evidence" value="ECO:0000266"/>
    <property type="project" value="RGD"/>
</dbReference>
<dbReference type="GO" id="GO:0043113">
    <property type="term" value="P:receptor clustering"/>
    <property type="evidence" value="ECO:0000266"/>
    <property type="project" value="RGD"/>
</dbReference>
<dbReference type="GO" id="GO:0048169">
    <property type="term" value="P:regulation of long-term neuronal synaptic plasticity"/>
    <property type="evidence" value="ECO:0000266"/>
    <property type="project" value="RGD"/>
</dbReference>
<dbReference type="GO" id="GO:0043408">
    <property type="term" value="P:regulation of MAPK cascade"/>
    <property type="evidence" value="ECO:0000266"/>
    <property type="project" value="RGD"/>
</dbReference>
<dbReference type="GO" id="GO:0050803">
    <property type="term" value="P:regulation of synapse structure or activity"/>
    <property type="evidence" value="ECO:0000266"/>
    <property type="project" value="RGD"/>
</dbReference>
<dbReference type="GO" id="GO:0048167">
    <property type="term" value="P:regulation of synaptic plasticity"/>
    <property type="evidence" value="ECO:0000314"/>
    <property type="project" value="UniProtKB"/>
</dbReference>
<dbReference type="GO" id="GO:0008542">
    <property type="term" value="P:visual learning"/>
    <property type="evidence" value="ECO:0000266"/>
    <property type="project" value="RGD"/>
</dbReference>
<dbReference type="CDD" id="cd04013">
    <property type="entry name" value="C2_SynGAP_like"/>
    <property type="match status" value="1"/>
</dbReference>
<dbReference type="CDD" id="cd13375">
    <property type="entry name" value="PH_SynGAP"/>
    <property type="match status" value="1"/>
</dbReference>
<dbReference type="CDD" id="cd05136">
    <property type="entry name" value="RasGAP_DAB2IP"/>
    <property type="match status" value="1"/>
</dbReference>
<dbReference type="CDD" id="cd22265">
    <property type="entry name" value="UDM1_RNF168"/>
    <property type="match status" value="1"/>
</dbReference>
<dbReference type="FunFam" id="1.10.506.10:FF:000001">
    <property type="entry name" value="Ras GTPase-activating protein nGAP isoform 2"/>
    <property type="match status" value="1"/>
</dbReference>
<dbReference type="FunFam" id="2.60.40.150:FF:000010">
    <property type="entry name" value="Ras GTPase-activating protein nGAP isoform 2"/>
    <property type="match status" value="1"/>
</dbReference>
<dbReference type="Gene3D" id="2.60.40.150">
    <property type="entry name" value="C2 domain"/>
    <property type="match status" value="1"/>
</dbReference>
<dbReference type="Gene3D" id="1.10.506.10">
    <property type="entry name" value="GTPase Activation - p120gap, domain 1"/>
    <property type="match status" value="2"/>
</dbReference>
<dbReference type="Gene3D" id="2.30.29.30">
    <property type="entry name" value="Pleckstrin-homology domain (PH domain)/Phosphotyrosine-binding domain (PTB)"/>
    <property type="match status" value="1"/>
</dbReference>
<dbReference type="InterPro" id="IPR000008">
    <property type="entry name" value="C2_dom"/>
</dbReference>
<dbReference type="InterPro" id="IPR035892">
    <property type="entry name" value="C2_domain_sf"/>
</dbReference>
<dbReference type="InterPro" id="IPR021887">
    <property type="entry name" value="DAB2P_C"/>
</dbReference>
<dbReference type="InterPro" id="IPR011993">
    <property type="entry name" value="PH-like_dom_sf"/>
</dbReference>
<dbReference type="InterPro" id="IPR001849">
    <property type="entry name" value="PH_domain"/>
</dbReference>
<dbReference type="InterPro" id="IPR039360">
    <property type="entry name" value="Ras_GTPase"/>
</dbReference>
<dbReference type="InterPro" id="IPR023152">
    <property type="entry name" value="RasGAP_CS"/>
</dbReference>
<dbReference type="InterPro" id="IPR001936">
    <property type="entry name" value="RasGAP_dom"/>
</dbReference>
<dbReference type="InterPro" id="IPR008936">
    <property type="entry name" value="Rho_GTPase_activation_prot"/>
</dbReference>
<dbReference type="InterPro" id="IPR037779">
    <property type="entry name" value="SynGAP_PH"/>
</dbReference>
<dbReference type="PANTHER" id="PTHR10194">
    <property type="entry name" value="RAS GTPASE-ACTIVATING PROTEINS"/>
    <property type="match status" value="1"/>
</dbReference>
<dbReference type="PANTHER" id="PTHR10194:SF25">
    <property type="entry name" value="RAS_RAP GTPASE-ACTIVATING PROTEIN SYNGAP"/>
    <property type="match status" value="1"/>
</dbReference>
<dbReference type="Pfam" id="PF00168">
    <property type="entry name" value="C2"/>
    <property type="match status" value="1"/>
</dbReference>
<dbReference type="Pfam" id="PF12004">
    <property type="entry name" value="DAB2P_C"/>
    <property type="match status" value="1"/>
</dbReference>
<dbReference type="Pfam" id="PF25321">
    <property type="entry name" value="PH_RASGAP"/>
    <property type="match status" value="1"/>
</dbReference>
<dbReference type="Pfam" id="PF00616">
    <property type="entry name" value="RasGAP"/>
    <property type="match status" value="2"/>
</dbReference>
<dbReference type="SMART" id="SM00239">
    <property type="entry name" value="C2"/>
    <property type="match status" value="1"/>
</dbReference>
<dbReference type="SMART" id="SM00233">
    <property type="entry name" value="PH"/>
    <property type="match status" value="1"/>
</dbReference>
<dbReference type="SMART" id="SM00323">
    <property type="entry name" value="RasGAP"/>
    <property type="match status" value="1"/>
</dbReference>
<dbReference type="SUPFAM" id="SSF49562">
    <property type="entry name" value="C2 domain (Calcium/lipid-binding domain, CaLB)"/>
    <property type="match status" value="1"/>
</dbReference>
<dbReference type="SUPFAM" id="SSF48350">
    <property type="entry name" value="GTPase activation domain, GAP"/>
    <property type="match status" value="1"/>
</dbReference>
<dbReference type="SUPFAM" id="SSF50729">
    <property type="entry name" value="PH domain-like"/>
    <property type="match status" value="1"/>
</dbReference>
<dbReference type="PROSITE" id="PS50004">
    <property type="entry name" value="C2"/>
    <property type="match status" value="1"/>
</dbReference>
<dbReference type="PROSITE" id="PS50003">
    <property type="entry name" value="PH_DOMAIN"/>
    <property type="match status" value="1"/>
</dbReference>
<dbReference type="PROSITE" id="PS00509">
    <property type="entry name" value="RAS_GTPASE_ACTIV_1"/>
    <property type="match status" value="1"/>
</dbReference>
<dbReference type="PROSITE" id="PS50018">
    <property type="entry name" value="RAS_GTPASE_ACTIV_2"/>
    <property type="match status" value="1"/>
</dbReference>
<organism>
    <name type="scientific">Rattus norvegicus</name>
    <name type="common">Rat</name>
    <dbReference type="NCBI Taxonomy" id="10116"/>
    <lineage>
        <taxon>Eukaryota</taxon>
        <taxon>Metazoa</taxon>
        <taxon>Chordata</taxon>
        <taxon>Craniata</taxon>
        <taxon>Vertebrata</taxon>
        <taxon>Euteleostomi</taxon>
        <taxon>Mammalia</taxon>
        <taxon>Eutheria</taxon>
        <taxon>Euarchontoglires</taxon>
        <taxon>Glires</taxon>
        <taxon>Rodentia</taxon>
        <taxon>Myomorpha</taxon>
        <taxon>Muroidea</taxon>
        <taxon>Muridae</taxon>
        <taxon>Murinae</taxon>
        <taxon>Rattus</taxon>
    </lineage>
</organism>
<name>SYGP1_RAT</name>
<comment type="function">
    <text evidence="7 8 11 12">Major constituent of the PSD essential for postsynaptic signaling. Inhibitory regulator of the Ras-cAMP pathway. Member of the NMDAR signaling complex in excitatory synapses, it may play a role in NMDAR-dependent control of AMPAR potentiation, AMPAR membrane trafficking and synaptic plasticity. Regulates AMPAR-mediated miniature excitatory postsynaptic currents. Exhibits dual GTPase-activating specificity for Ras and Rap. May be involved in certain forms of brain injury, leading to long-term learning and memory deficits.</text>
</comment>
<comment type="subunit">
    <text evidence="1 7 9 14">Isoforms containing the PDZ-binding domain associate with DLG4 and DLG3 to form the PSD protein complex colocalized with GRIN2B at synapses (PubMed:9581761). Interacts with MPDZ, KLHL17, CAMK2A and CAMK2B (PubMed:15312654, PubMed:16054660). Interacts with FAM81A; the interaction facilitates condensate formation via liquid-liquid phase separation (By similarity).</text>
</comment>
<comment type="interaction">
    <interactant intactId="EBI-2310349">
        <id>Q9QUH6</id>
    </interactant>
    <interactant intactId="EBI-375655">
        <id>P31016</id>
        <label>Dlg4</label>
    </interactant>
    <organismsDiffer>false</organismsDiffer>
    <experiments>3</experiments>
</comment>
<comment type="interaction">
    <interactant intactId="EBI-2310349">
        <id>Q9QUH6</id>
    </interactant>
    <interactant intactId="EBI-7713653">
        <id>Q8K430</id>
        <label>Klhl17</label>
    </interactant>
    <organismsDiffer>false</organismsDiffer>
    <experiments>2</experiments>
</comment>
<comment type="interaction">
    <interactant intactId="EBI-2310349">
        <id>Q9QUH6</id>
    </interactant>
    <interactant intactId="EBI-7713572">
        <id>Q9JJ40</id>
        <label>Pdzk1</label>
    </interactant>
    <organismsDiffer>false</organismsDiffer>
    <experiments>6</experiments>
</comment>
<comment type="subcellular location">
    <subcellularLocation>
        <location>Membrane</location>
        <topology>Peripheral membrane protein</topology>
    </subcellularLocation>
    <subcellularLocation>
        <location>Synapse</location>
    </subcellularLocation>
    <text>Mostly in excitatory glutamatergic synapses.</text>
</comment>
<comment type="alternative products">
    <event type="alternative splicing"/>
    <isoform>
        <id>Q9QUH6-1</id>
        <name>1</name>
        <sequence type="displayed"/>
    </isoform>
    <isoform>
        <id>Q9QUH6-2</id>
        <name>2</name>
        <name>SynGAP-a</name>
        <sequence type="described" ref="VSP_026378 VSP_007979"/>
    </isoform>
    <isoform>
        <id>Q9QUH6-3</id>
        <name>3</name>
        <name>SynGAP-b</name>
        <sequence type="described" ref="VSP_007974"/>
    </isoform>
    <isoform>
        <id>Q9QUH6-4</id>
        <name>4</name>
        <name>SynGAP-c</name>
        <sequence type="described" ref="VSP_007976 VSP_007980"/>
    </isoform>
    <isoform>
        <id>Q9QUH6-5</id>
        <name>5</name>
        <name>SynGAP-d</name>
        <name>SynGAP-beta</name>
        <sequence type="described" ref="VSP_007975 VSP_007977 VSP_007978"/>
    </isoform>
    <text>Additional isoforms seem to exist.</text>
</comment>
<comment type="tissue specificity">
    <text evidence="10">Highly expressed in brain; predominantly in the cortex, hippocampus and olfactory bulb. Present in the postsynaptic density of central excitatory synapses.</text>
</comment>
<comment type="domain">
    <text evidence="12">The PDZ-binding domain interacts with all three PDZ domains of DGL4.</text>
</comment>
<comment type="domain">
    <text evidence="12">The C2 domain is required for RapGAP activity.</text>
</comment>
<comment type="PTM">
    <text evidence="7 13">Phosphorylated by CaM-kinase II. Dephosphorylated upon NMDA receptor activation or SYNGAP1/MPDZ complex disruption. Phosphorylation by PLK2 promotes its activity.</text>
</comment>
<comment type="caution">
    <text evidence="18">It is uncertain whether Met-1 or Met-16 is the initiator methionine.</text>
</comment>
<comment type="sequence caution" evidence="18">
    <conflict type="erroneous initiation">
        <sequence resource="EMBL-CDS" id="AAC08071"/>
    </conflict>
</comment>
<protein>
    <recommendedName>
        <fullName>Ras/Rap GTPase-activating protein SynGAP</fullName>
    </recommendedName>
    <alternativeName>
        <fullName>Neuronal RasGAP</fullName>
    </alternativeName>
    <alternativeName>
        <fullName>Synaptic Ras GTPase-activating protein 1</fullName>
        <shortName>Synaptic Ras-GAP 1</shortName>
    </alternativeName>
    <alternativeName>
        <fullName>p135 SynGAP</fullName>
    </alternativeName>
</protein>
<evidence type="ECO:0000250" key="1">
    <source>
        <dbReference type="UniProtKB" id="F6SEU4"/>
    </source>
</evidence>
<evidence type="ECO:0000255" key="2"/>
<evidence type="ECO:0000255" key="3">
    <source>
        <dbReference type="PROSITE-ProRule" id="PRU00041"/>
    </source>
</evidence>
<evidence type="ECO:0000255" key="4">
    <source>
        <dbReference type="PROSITE-ProRule" id="PRU00145"/>
    </source>
</evidence>
<evidence type="ECO:0000255" key="5">
    <source>
        <dbReference type="PROSITE-ProRule" id="PRU00167"/>
    </source>
</evidence>
<evidence type="ECO:0000256" key="6">
    <source>
        <dbReference type="SAM" id="MobiDB-lite"/>
    </source>
</evidence>
<evidence type="ECO:0000269" key="7">
    <source>
    </source>
</evidence>
<evidence type="ECO:0000269" key="8">
    <source>
    </source>
</evidence>
<evidence type="ECO:0000269" key="9">
    <source>
    </source>
</evidence>
<evidence type="ECO:0000269" key="10">
    <source>
    </source>
</evidence>
<evidence type="ECO:0000269" key="11">
    <source>
    </source>
</evidence>
<evidence type="ECO:0000269" key="12">
    <source>
    </source>
</evidence>
<evidence type="ECO:0000269" key="13">
    <source>
    </source>
</evidence>
<evidence type="ECO:0000269" key="14">
    <source>
    </source>
</evidence>
<evidence type="ECO:0000303" key="15">
    <source>
    </source>
</evidence>
<evidence type="ECO:0000303" key="16">
    <source>
    </source>
</evidence>
<evidence type="ECO:0000303" key="17">
    <source>
    </source>
</evidence>
<evidence type="ECO:0000305" key="18"/>
<evidence type="ECO:0007744" key="19">
    <source>
    </source>
</evidence>
<evidence type="ECO:0007829" key="20">
    <source>
        <dbReference type="PDB" id="3BXJ"/>
    </source>
</evidence>
<evidence type="ECO:0007829" key="21">
    <source>
        <dbReference type="PDB" id="8YM2"/>
    </source>
</evidence>
<proteinExistence type="evidence at protein level"/>
<reference key="1">
    <citation type="journal article" date="1998" name="Neuron">
        <title>A synaptic Ras-GTPase activating protein (p135 SynGAP) inhibited by CaM kinase II.</title>
        <authorList>
            <person name="Chen H.-J."/>
            <person name="Rojas-Soto M."/>
            <person name="Oguni A."/>
            <person name="Kennedy M.B."/>
        </authorList>
    </citation>
    <scope>NUCLEOTIDE SEQUENCE [MRNA] (ISOFORM 1)</scope>
    <scope>NUCLEOTIDE SEQUENCE [MRNA] OF 16-276 (ISOFORM 3)</scope>
    <scope>NUCLEOTIDE SEQUENCE [MRNA] OF 1264-1290 (ISOFORM 5)</scope>
    <scope>PROTEIN SEQUENCE OF 32-47; 242-248; 259-272; 300-321; 325-329; 340-354; 419-429; 588-596; 804-815; 923-940; 968-1002; 1086-1102 AND 1276-1286</scope>
    <source>
        <strain>Sprague-Dawley</strain>
    </source>
</reference>
<reference key="2">
    <citation type="journal article" date="2002" name="Neuron">
        <authorList>
            <person name="Oh J.S."/>
            <person name="Chen H.-J."/>
            <person name="Rojas-Soto M."/>
            <person name="Oguni A."/>
            <person name="Kennedy M.B."/>
        </authorList>
    </citation>
    <scope>ERRATUM OF PUBMED:9620694</scope>
</reference>
<reference key="3">
    <citation type="journal article" date="1998" name="Neuron">
        <title>SynGAP: a synaptic RasGAP that associates with the PSD-95/SAP90 protein family.</title>
        <authorList>
            <person name="Kim J.H."/>
            <person name="Liao D."/>
            <person name="Lau L.-F."/>
            <person name="Huganir R.L."/>
        </authorList>
    </citation>
    <scope>NUCLEOTIDE SEQUENCE [MRNA] (ISOFORMS 2; 3 AND 4)</scope>
    <scope>INTERACTION WITH DLG3 AND DLG4</scope>
    <source>
        <tissue>Hippocampus</tissue>
    </source>
</reference>
<reference key="4">
    <citation type="journal article" date="2001" name="J. Biol. Chem.">
        <title>Characterization of a novel synGAP isoform, synGAP-beta.</title>
        <authorList>
            <person name="Li W."/>
            <person name="Okano A."/>
            <person name="Tian Q.B."/>
            <person name="Nakayama K."/>
            <person name="Furihata T."/>
            <person name="Nawa H."/>
            <person name="Suzuki T."/>
        </authorList>
    </citation>
    <scope>NUCLEOTIDE SEQUENCE [MRNA] (ISOFORM 5)</scope>
    <source>
        <strain>Sprague-Dawley</strain>
    </source>
</reference>
<reference key="5">
    <citation type="journal article" date="2004" name="Neuron">
        <title>SynGAP-MUPP1-CaMKII synaptic complexes regulate p38 MAP kinase activity and NMDA receptor-dependent synaptic AMPA receptor potentiation.</title>
        <authorList>
            <person name="Krapivinsky G."/>
            <person name="Medina I."/>
            <person name="Krapivinsky L."/>
            <person name="Gapon S."/>
            <person name="Clapham D.E."/>
        </authorList>
    </citation>
    <scope>INTERACTION WITH MPDZ; DLG4; CAMK2A AND CAMK2B</scope>
    <scope>PHOSPHORYLATION</scope>
    <scope>FUNCTION</scope>
</reference>
<reference key="6">
    <citation type="journal article" date="2004" name="Neurosci. Lett.">
        <title>Impaired SynGAP expression and long-term spatial learning and memory in hippocampal CA1 area from rats previously exposed to perinatal hypoxia-induced insults: beneficial effects of A68930.</title>
        <authorList>
            <person name="Yang S.-N."/>
            <person name="Huang C.-B."/>
            <person name="Yang C.-H."/>
            <person name="Lai M.-C."/>
            <person name="Chen W.-F."/>
            <person name="Wang C.-L."/>
            <person name="Wu C.-L."/>
            <person name="Huang L.-T."/>
        </authorList>
    </citation>
    <scope>FUNCTION</scope>
</reference>
<reference key="7">
    <citation type="journal article" date="2005" name="Neuropharmacology">
        <title>Interactions between CAP70 and actinfilin are important for integrity of actin cytoskeleton structures in neurons.</title>
        <authorList>
            <person name="Chen Y."/>
            <person name="Li M."/>
        </authorList>
    </citation>
    <scope>INTERACTION WITH KLHL17</scope>
</reference>
<reference key="8">
    <citation type="journal article" date="2006" name="Mol. Cell. Proteomics">
        <title>Relative and absolute quantification of postsynaptic density proteome isolated from rat forebrain and cerebellum.</title>
        <authorList>
            <person name="Cheng D."/>
            <person name="Hoogenraad C.C."/>
            <person name="Rush J."/>
            <person name="Ramm E."/>
            <person name="Schlager M.A."/>
            <person name="Duong D.M."/>
            <person name="Xu P."/>
            <person name="Wijayawardana S.R."/>
            <person name="Hanfelt J."/>
            <person name="Nakagawa T."/>
            <person name="Sheng M."/>
            <person name="Peng J."/>
        </authorList>
    </citation>
    <scope>TISSUE SPECIFICITY</scope>
</reference>
<reference key="9">
    <citation type="journal article" date="2006" name="Proc. Natl. Acad. Sci. U.S.A.">
        <title>SynGAP regulates synaptic strength and mitogen-activated protein kinases in cultured neurons.</title>
        <authorList>
            <person name="Rumbaugh G."/>
            <person name="Adams J.P."/>
            <person name="Kim J.H."/>
            <person name="Huganir R.L."/>
        </authorList>
    </citation>
    <scope>FUNCTION</scope>
</reference>
<reference key="10">
    <citation type="journal article" date="2011" name="Neuron">
        <title>Requirement for Plk2 in orchestrated ras and rap signaling, homeostatic structural plasticity, and memory.</title>
        <authorList>
            <person name="Lee K.J."/>
            <person name="Lee Y."/>
            <person name="Rozeboom A."/>
            <person name="Lee J.Y."/>
            <person name="Udagawa N."/>
            <person name="Hoe H.S."/>
            <person name="Pak D.T."/>
        </authorList>
    </citation>
    <scope>PHOSPHORYLATION AT SER-379; SER-385; SER-449; SER-466; SER-836; SER-840; SER-842 AND SER-895</scope>
    <scope>MUTAGENESIS OF SER-385; SER-449; SER-840 AND SER-842</scope>
</reference>
<reference key="11">
    <citation type="journal article" date="2012" name="Nat. Commun.">
        <title>Quantitative maps of protein phosphorylation sites across 14 different rat organs and tissues.</title>
        <authorList>
            <person name="Lundby A."/>
            <person name="Secher A."/>
            <person name="Lage K."/>
            <person name="Nordsborg N.B."/>
            <person name="Dmytriyev A."/>
            <person name="Lundby C."/>
            <person name="Olsen J.V."/>
        </authorList>
    </citation>
    <scope>PHOSPHORYLATION [LARGE SCALE ANALYSIS] AT SER-117; SER-371; SER-752; SER-766; SER-780; SER-892; SER-895; SER-898; SER-1114; SER-1118; SER-1121 AND SER-1204</scope>
    <scope>IDENTIFICATION BY MASS SPECTROMETRY [LARGE SCALE ANALYSIS]</scope>
</reference>
<reference key="12">
    <citation type="journal article" date="2008" name="EMBO Rep.">
        <title>The C2 domain of SynGAP is essential for stimulation of the Rap GTPase reaction.</title>
        <authorList>
            <person name="Pena V."/>
            <person name="Hothorn M."/>
            <person name="Eberth A."/>
            <person name="Kaschau N."/>
            <person name="Parret A."/>
            <person name="Gremer L."/>
            <person name="Bonneau F."/>
            <person name="Ahmadian M.R."/>
            <person name="Scheffzek K."/>
        </authorList>
    </citation>
    <scope>X-RAY CRYSTALLOGRAPHY (3.0 ANGSTROMS) OF 252-734</scope>
    <scope>FUNCTION</scope>
    <scope>DOMAIN C2</scope>
    <scope>MUTAGENESIS OF ARG-485 AND ASN-487</scope>
</reference>
<sequence>MSRSRASIHRGSIPAMSYAPFRDVRGPPMHRTQYVHSPYDRPGWNPRFCIISGNQLLMLDEDEIHPLLIRDRRSESSRNKLLRRTVSVPVEGRPHGEHEYHLGRSRRKSVPGGKQYSMEAAPAAPFRPSQGFLSRRLKSSIKRTKSQPKLDRTSSFRQILPRFRSADHDRARLMQSFKESHSHESLLSPSSAAEALELNLDEDSIIKPVHSSILGQEFCFEVTTSSGTKCFACRSAAERDKWIENLQRAVKPNKDNSRRVDNVLKLWIIEARELPPKKRYYCELCLDDMLYARTTSKPRSASGDTVFWGEHFEFNNLPAVRALRLHLYRDSDKKRKKDKAGYVGLVTVPVATLAGRHFTEQWYPVTLPTGSGGSGGMGSGGGGGSGGGSGGKGKGGCPAVRLKARYQTMSILPMELYKEFAEYVTNHYRMLCAVLEPALNVKGKEEVASALVHILQSTGKAKDFLSDMAMSEVDRFMEREHLIFRENTLATKAIEEYMRLIGQKYLKDAIGEFIRALYESEENCEVDPIKCTASSLAEHQANLRMCCELALCKVVNSHCVFPRELKEVFASWRLRCAERGREDIADRLISASLFLRFLCPAIMSPSLFGLMQEYPDEQTSRTLTLIAKVIQNLANFSKFTSKEDFLGFMNEFLELEWGSMQQFLYEISNLDTLTNSSSFEGYIDLGRELSTLHALLWEVLPQLSKEALLKLGPLPRLLSDISTALRNPNIQRQPSRQSERARSQPMVLRGPSAEMQGYMMRDLNSSIDLQSFMARGLNSSMDMARLPSPTKEKPPPPPPGGGKDLFYVSRPPLARSSPAYCTSSSDITEPEQKMLSVNKSVSMLDLQGDGPGGRLNSSSVSNLAAVGDLLHSSQASLTAALGLRPAPAGRLSQGSGSSITAAGMRLSQMGVTTDGVPAQQLRIPLSFQNPLFHMAADGPGPPAGHGGSSGHGPPSSHHHHHHHHHHRGGEPPGDTFAPFHGYSKSEDLSTGVPKPPAASILHSHSYSDEFGPSGTDFTRRQLSLQDNLQHMLSPPQITIGPQRPAPSGPGGGSGGGSGGGGGGQPPPLQRGKSQQLTVSAAQKPRPSSGNLLQSPEPSYGPARPRQQSLSKEGSIGGSGGSGGGGGGGLKPSITKQHSQTPSTLNPTMPASERTVAWVSNMPHLSADIESAHIEREEYKLKEYSKSMDESRLDRVKEYEEEIHSLKERLHMSNRKLEEYERRLLSQEEQTSKILMQYQARLEQSEKRLRQQQVEKDSQIKSIIGRLMLVEEELRRDHPAMAEPLPEPKKRLLDAQRGSFPPWVQQTRV</sequence>